<comment type="function">
    <text evidence="1">Hydrolyzes ribosome-free peptidyl-tRNAs (with 1 or more amino acids incorporated), which drop off the ribosome during protein synthesis, or as a result of ribosome stalling.</text>
</comment>
<comment type="function">
    <text evidence="1">Catalyzes the release of premature peptidyl moieties from peptidyl-tRNA molecules trapped in stalled 50S ribosomal subunits, and thus maintains levels of free tRNAs and 50S ribosomes.</text>
</comment>
<comment type="catalytic activity">
    <reaction evidence="1">
        <text>an N-acyl-L-alpha-aminoacyl-tRNA + H2O = an N-acyl-L-amino acid + a tRNA + H(+)</text>
        <dbReference type="Rhea" id="RHEA:54448"/>
        <dbReference type="Rhea" id="RHEA-COMP:10123"/>
        <dbReference type="Rhea" id="RHEA-COMP:13883"/>
        <dbReference type="ChEBI" id="CHEBI:15377"/>
        <dbReference type="ChEBI" id="CHEBI:15378"/>
        <dbReference type="ChEBI" id="CHEBI:59874"/>
        <dbReference type="ChEBI" id="CHEBI:78442"/>
        <dbReference type="ChEBI" id="CHEBI:138191"/>
        <dbReference type="EC" id="3.1.1.29"/>
    </reaction>
</comment>
<comment type="subunit">
    <text evidence="1">Monomer.</text>
</comment>
<comment type="subcellular location">
    <subcellularLocation>
        <location evidence="1">Cytoplasm</location>
    </subcellularLocation>
</comment>
<comment type="similarity">
    <text evidence="1">Belongs to the PTH family.</text>
</comment>
<evidence type="ECO:0000255" key="1">
    <source>
        <dbReference type="HAMAP-Rule" id="MF_00083"/>
    </source>
</evidence>
<name>PTH_MYCBO</name>
<keyword id="KW-0963">Cytoplasm</keyword>
<keyword id="KW-0378">Hydrolase</keyword>
<keyword id="KW-1185">Reference proteome</keyword>
<keyword id="KW-0694">RNA-binding</keyword>
<keyword id="KW-0820">tRNA-binding</keyword>
<reference key="1">
    <citation type="journal article" date="2003" name="Proc. Natl. Acad. Sci. U.S.A.">
        <title>The complete genome sequence of Mycobacterium bovis.</title>
        <authorList>
            <person name="Garnier T."/>
            <person name="Eiglmeier K."/>
            <person name="Camus J.-C."/>
            <person name="Medina N."/>
            <person name="Mansoor H."/>
            <person name="Pryor M."/>
            <person name="Duthoy S."/>
            <person name="Grondin S."/>
            <person name="Lacroix C."/>
            <person name="Monsempe C."/>
            <person name="Simon S."/>
            <person name="Harris B."/>
            <person name="Atkin R."/>
            <person name="Doggett J."/>
            <person name="Mayes R."/>
            <person name="Keating L."/>
            <person name="Wheeler P.R."/>
            <person name="Parkhill J."/>
            <person name="Barrell B.G."/>
            <person name="Cole S.T."/>
            <person name="Gordon S.V."/>
            <person name="Hewinson R.G."/>
        </authorList>
    </citation>
    <scope>NUCLEOTIDE SEQUENCE [LARGE SCALE GENOMIC DNA]</scope>
    <source>
        <strain>ATCC BAA-935 / AF2122/97</strain>
    </source>
</reference>
<reference key="2">
    <citation type="journal article" date="2017" name="Genome Announc.">
        <title>Updated reference genome sequence and annotation of Mycobacterium bovis AF2122/97.</title>
        <authorList>
            <person name="Malone K.M."/>
            <person name="Farrell D."/>
            <person name="Stuber T.P."/>
            <person name="Schubert O.T."/>
            <person name="Aebersold R."/>
            <person name="Robbe-Austerman S."/>
            <person name="Gordon S.V."/>
        </authorList>
    </citation>
    <scope>NUCLEOTIDE SEQUENCE [LARGE SCALE GENOMIC DNA]</scope>
    <scope>GENOME REANNOTATION</scope>
    <source>
        <strain>ATCC BAA-935 / AF2122/97</strain>
    </source>
</reference>
<dbReference type="EC" id="3.1.1.29" evidence="1"/>
<dbReference type="EMBL" id="LT708304">
    <property type="protein sequence ID" value="SIT99641.1"/>
    <property type="molecule type" value="Genomic_DNA"/>
</dbReference>
<dbReference type="RefSeq" id="NP_854698.1">
    <property type="nucleotide sequence ID" value="NC_002945.3"/>
</dbReference>
<dbReference type="RefSeq" id="WP_003405251.1">
    <property type="nucleotide sequence ID" value="NC_002945.4"/>
</dbReference>
<dbReference type="BMRB" id="P65866"/>
<dbReference type="SMR" id="P65866"/>
<dbReference type="GeneID" id="45424985"/>
<dbReference type="KEGG" id="mbo:BQ2027_MB1042C"/>
<dbReference type="PATRIC" id="fig|233413.5.peg.1132"/>
<dbReference type="Proteomes" id="UP000001419">
    <property type="component" value="Chromosome"/>
</dbReference>
<dbReference type="GO" id="GO:0005737">
    <property type="term" value="C:cytoplasm"/>
    <property type="evidence" value="ECO:0007669"/>
    <property type="project" value="UniProtKB-SubCell"/>
</dbReference>
<dbReference type="GO" id="GO:0004045">
    <property type="term" value="F:peptidyl-tRNA hydrolase activity"/>
    <property type="evidence" value="ECO:0007669"/>
    <property type="project" value="UniProtKB-UniRule"/>
</dbReference>
<dbReference type="GO" id="GO:0000049">
    <property type="term" value="F:tRNA binding"/>
    <property type="evidence" value="ECO:0007669"/>
    <property type="project" value="UniProtKB-UniRule"/>
</dbReference>
<dbReference type="GO" id="GO:0006515">
    <property type="term" value="P:protein quality control for misfolded or incompletely synthesized proteins"/>
    <property type="evidence" value="ECO:0007669"/>
    <property type="project" value="UniProtKB-UniRule"/>
</dbReference>
<dbReference type="GO" id="GO:0072344">
    <property type="term" value="P:rescue of stalled ribosome"/>
    <property type="evidence" value="ECO:0007669"/>
    <property type="project" value="UniProtKB-UniRule"/>
</dbReference>
<dbReference type="CDD" id="cd00462">
    <property type="entry name" value="PTH"/>
    <property type="match status" value="1"/>
</dbReference>
<dbReference type="FunFam" id="3.40.50.1470:FF:000001">
    <property type="entry name" value="Peptidyl-tRNA hydrolase"/>
    <property type="match status" value="1"/>
</dbReference>
<dbReference type="Gene3D" id="3.40.50.1470">
    <property type="entry name" value="Peptidyl-tRNA hydrolase"/>
    <property type="match status" value="1"/>
</dbReference>
<dbReference type="HAMAP" id="MF_00083">
    <property type="entry name" value="Pept_tRNA_hydro_bact"/>
    <property type="match status" value="1"/>
</dbReference>
<dbReference type="InterPro" id="IPR001328">
    <property type="entry name" value="Pept_tRNA_hydro"/>
</dbReference>
<dbReference type="InterPro" id="IPR018171">
    <property type="entry name" value="Pept_tRNA_hydro_CS"/>
</dbReference>
<dbReference type="InterPro" id="IPR036416">
    <property type="entry name" value="Pept_tRNA_hydro_sf"/>
</dbReference>
<dbReference type="NCBIfam" id="TIGR00447">
    <property type="entry name" value="pth"/>
    <property type="match status" value="1"/>
</dbReference>
<dbReference type="PANTHER" id="PTHR17224">
    <property type="entry name" value="PEPTIDYL-TRNA HYDROLASE"/>
    <property type="match status" value="1"/>
</dbReference>
<dbReference type="PANTHER" id="PTHR17224:SF1">
    <property type="entry name" value="PEPTIDYL-TRNA HYDROLASE"/>
    <property type="match status" value="1"/>
</dbReference>
<dbReference type="Pfam" id="PF01195">
    <property type="entry name" value="Pept_tRNA_hydro"/>
    <property type="match status" value="1"/>
</dbReference>
<dbReference type="SUPFAM" id="SSF53178">
    <property type="entry name" value="Peptidyl-tRNA hydrolase-like"/>
    <property type="match status" value="1"/>
</dbReference>
<dbReference type="PROSITE" id="PS01195">
    <property type="entry name" value="PEPT_TRNA_HYDROL_1"/>
    <property type="match status" value="1"/>
</dbReference>
<dbReference type="PROSITE" id="PS01196">
    <property type="entry name" value="PEPT_TRNA_HYDROL_2"/>
    <property type="match status" value="1"/>
</dbReference>
<proteinExistence type="inferred from homology"/>
<feature type="chain" id="PRO_0000187769" description="Peptidyl-tRNA hydrolase">
    <location>
        <begin position="1"/>
        <end position="191"/>
    </location>
</feature>
<feature type="active site" description="Proton acceptor" evidence="1">
    <location>
        <position position="22"/>
    </location>
</feature>
<feature type="binding site" evidence="1">
    <location>
        <position position="17"/>
    </location>
    <ligand>
        <name>tRNA</name>
        <dbReference type="ChEBI" id="CHEBI:17843"/>
    </ligand>
</feature>
<feature type="binding site" evidence="1">
    <location>
        <position position="68"/>
    </location>
    <ligand>
        <name>tRNA</name>
        <dbReference type="ChEBI" id="CHEBI:17843"/>
    </ligand>
</feature>
<feature type="binding site" evidence="1">
    <location>
        <position position="70"/>
    </location>
    <ligand>
        <name>tRNA</name>
        <dbReference type="ChEBI" id="CHEBI:17843"/>
    </ligand>
</feature>
<feature type="binding site" evidence="1">
    <location>
        <position position="116"/>
    </location>
    <ligand>
        <name>tRNA</name>
        <dbReference type="ChEBI" id="CHEBI:17843"/>
    </ligand>
</feature>
<feature type="site" description="Discriminates between blocked and unblocked aminoacyl-tRNA" evidence="1">
    <location>
        <position position="12"/>
    </location>
</feature>
<feature type="site" description="Stabilizes the basic form of H active site to accept a proton" evidence="1">
    <location>
        <position position="95"/>
    </location>
</feature>
<organism>
    <name type="scientific">Mycobacterium bovis (strain ATCC BAA-935 / AF2122/97)</name>
    <dbReference type="NCBI Taxonomy" id="233413"/>
    <lineage>
        <taxon>Bacteria</taxon>
        <taxon>Bacillati</taxon>
        <taxon>Actinomycetota</taxon>
        <taxon>Actinomycetes</taxon>
        <taxon>Mycobacteriales</taxon>
        <taxon>Mycobacteriaceae</taxon>
        <taxon>Mycobacterium</taxon>
        <taxon>Mycobacterium tuberculosis complex</taxon>
    </lineage>
</organism>
<accession>P65866</accession>
<accession>A0A1R3XX42</accession>
<accession>P96386</accession>
<accession>X2BGI9</accession>
<protein>
    <recommendedName>
        <fullName evidence="1">Peptidyl-tRNA hydrolase</fullName>
        <shortName evidence="1">Pth</shortName>
        <ecNumber evidence="1">3.1.1.29</ecNumber>
    </recommendedName>
</protein>
<sequence length="191" mass="20456">MAEPLLVVGLGNPGANYARTRHNLGFVVADLLAARLGAKFKAHKRSGAEVATGRSAGRSLVLAKPRCYMNESGRQIGPLAKFYSVAPANIIVIHDDLDLEFGRIRLKIGGGEGGHNGLRSVVAALGTKDFQRVRIGIGRPPGRKDPAAFVLENFTPAERAEVPTICEQAADATELLIEQGMEPAQNRVHAW</sequence>
<gene>
    <name evidence="1" type="primary">pth</name>
    <name type="ordered locus">BQ2027_MB1042C</name>
</gene>